<sequence>MEPKTKKQRSLYIPYAGPVLLEFPLLNKGSAFSMEERRNFNLLGLLPEVVETIEEQAERAWIQYQGFKTEIDKHIYLRNIQDTNETLFYRLVNNHLDEMMPVIYTPTVGAACERFSEIYRRSRGVFISYQNRHNMDDILQNVPNHNIKVIVVTDGERILGLGDQGIGGMGIPIGKLSLYTACGGISPAYTLPVVLDVGTNNQQLLNDPLYMGWRNPRITDDEYYEFVDEFIQAVKQRWPDVLLQFEDFAQKNAMPLLNRYRNEICSFNDDIQGTAAVTVGTLIAASRAAGGQLSEKKIVFLGAGSAGCGIAEMIIAQTQREGLSEEAARQKVFMVDRFGLLTDKMPNLLPFQTKLVQKRENLSDWDTDSDVLSLLDVVRNVKPDILIGVSGQTGLFTEEIIREMHKHCPRPIVMPLSNPTSRVEATPQDIIAWTEGNALVATGSPFNPVVWKDKIYPIAQCNNAFIFPGIGLGVIASGASRITDEMLMSASETLAQYSPLVLNGEGLVLPELKDIQKVSRAIAFAVGKMAQQQGVAVKTSAEALQQAIDDNFWHAEYRDYRRTSI</sequence>
<feature type="chain" id="PRO_1000185988" description="NAD-dependent malic enzyme">
    <location>
        <begin position="1"/>
        <end position="565"/>
    </location>
</feature>
<feature type="active site" description="Proton donor" evidence="1">
    <location>
        <position position="104"/>
    </location>
</feature>
<feature type="active site" description="Proton acceptor" evidence="1">
    <location>
        <position position="175"/>
    </location>
</feature>
<feature type="binding site" evidence="1">
    <location>
        <position position="157"/>
    </location>
    <ligand>
        <name>NAD(+)</name>
        <dbReference type="ChEBI" id="CHEBI:57540"/>
    </ligand>
</feature>
<feature type="binding site" evidence="1">
    <location>
        <position position="246"/>
    </location>
    <ligand>
        <name>a divalent metal cation</name>
        <dbReference type="ChEBI" id="CHEBI:60240"/>
    </ligand>
</feature>
<feature type="binding site" evidence="1">
    <location>
        <position position="247"/>
    </location>
    <ligand>
        <name>a divalent metal cation</name>
        <dbReference type="ChEBI" id="CHEBI:60240"/>
    </ligand>
</feature>
<feature type="binding site" evidence="1">
    <location>
        <position position="270"/>
    </location>
    <ligand>
        <name>a divalent metal cation</name>
        <dbReference type="ChEBI" id="CHEBI:60240"/>
    </ligand>
</feature>
<feature type="binding site" evidence="1">
    <location>
        <position position="270"/>
    </location>
    <ligand>
        <name>NAD(+)</name>
        <dbReference type="ChEBI" id="CHEBI:57540"/>
    </ligand>
</feature>
<feature type="binding site" evidence="1">
    <location>
        <position position="418"/>
    </location>
    <ligand>
        <name>NAD(+)</name>
        <dbReference type="ChEBI" id="CHEBI:57540"/>
    </ligand>
</feature>
<feature type="site" description="Important for activity" evidence="1">
    <location>
        <position position="270"/>
    </location>
</feature>
<name>MAO1_ECO27</name>
<gene>
    <name evidence="1" type="primary">maeA</name>
    <name type="ordered locus">E2348C_1613</name>
</gene>
<accession>B7URL9</accession>
<proteinExistence type="inferred from homology"/>
<comment type="catalytic activity">
    <reaction evidence="1">
        <text>(S)-malate + NAD(+) = pyruvate + CO2 + NADH</text>
        <dbReference type="Rhea" id="RHEA:12653"/>
        <dbReference type="ChEBI" id="CHEBI:15361"/>
        <dbReference type="ChEBI" id="CHEBI:15589"/>
        <dbReference type="ChEBI" id="CHEBI:16526"/>
        <dbReference type="ChEBI" id="CHEBI:57540"/>
        <dbReference type="ChEBI" id="CHEBI:57945"/>
        <dbReference type="EC" id="1.1.1.38"/>
    </reaction>
</comment>
<comment type="catalytic activity">
    <reaction evidence="1">
        <text>oxaloacetate + H(+) = pyruvate + CO2</text>
        <dbReference type="Rhea" id="RHEA:15641"/>
        <dbReference type="ChEBI" id="CHEBI:15361"/>
        <dbReference type="ChEBI" id="CHEBI:15378"/>
        <dbReference type="ChEBI" id="CHEBI:16452"/>
        <dbReference type="ChEBI" id="CHEBI:16526"/>
        <dbReference type="EC" id="1.1.1.38"/>
    </reaction>
</comment>
<comment type="cofactor">
    <cofactor evidence="1">
        <name>Mg(2+)</name>
        <dbReference type="ChEBI" id="CHEBI:18420"/>
    </cofactor>
    <cofactor evidence="1">
        <name>Mn(2+)</name>
        <dbReference type="ChEBI" id="CHEBI:29035"/>
    </cofactor>
    <text evidence="1">Divalent metal cations. Prefers magnesium or manganese.</text>
</comment>
<comment type="subunit">
    <text evidence="1">Homotetramer.</text>
</comment>
<comment type="similarity">
    <text evidence="1">Belongs to the malic enzymes family.</text>
</comment>
<evidence type="ECO:0000255" key="1">
    <source>
        <dbReference type="HAMAP-Rule" id="MF_01619"/>
    </source>
</evidence>
<keyword id="KW-0479">Metal-binding</keyword>
<keyword id="KW-0520">NAD</keyword>
<keyword id="KW-0560">Oxidoreductase</keyword>
<keyword id="KW-1185">Reference proteome</keyword>
<organism>
    <name type="scientific">Escherichia coli O127:H6 (strain E2348/69 / EPEC)</name>
    <dbReference type="NCBI Taxonomy" id="574521"/>
    <lineage>
        <taxon>Bacteria</taxon>
        <taxon>Pseudomonadati</taxon>
        <taxon>Pseudomonadota</taxon>
        <taxon>Gammaproteobacteria</taxon>
        <taxon>Enterobacterales</taxon>
        <taxon>Enterobacteriaceae</taxon>
        <taxon>Escherichia</taxon>
    </lineage>
</organism>
<dbReference type="EC" id="1.1.1.38" evidence="1"/>
<dbReference type="EMBL" id="FM180568">
    <property type="protein sequence ID" value="CAS09161.1"/>
    <property type="molecule type" value="Genomic_DNA"/>
</dbReference>
<dbReference type="RefSeq" id="WP_000433462.1">
    <property type="nucleotide sequence ID" value="NC_011601.1"/>
</dbReference>
<dbReference type="SMR" id="B7URL9"/>
<dbReference type="KEGG" id="ecg:E2348C_1613"/>
<dbReference type="HOGENOM" id="CLU_011405_5_2_6"/>
<dbReference type="Proteomes" id="UP000008205">
    <property type="component" value="Chromosome"/>
</dbReference>
<dbReference type="GO" id="GO:0005829">
    <property type="term" value="C:cytosol"/>
    <property type="evidence" value="ECO:0007669"/>
    <property type="project" value="TreeGrafter"/>
</dbReference>
<dbReference type="GO" id="GO:0004471">
    <property type="term" value="F:malate dehydrogenase (decarboxylating) (NAD+) activity"/>
    <property type="evidence" value="ECO:0007669"/>
    <property type="project" value="UniProtKB-UniRule"/>
</dbReference>
<dbReference type="GO" id="GO:0046872">
    <property type="term" value="F:metal ion binding"/>
    <property type="evidence" value="ECO:0007669"/>
    <property type="project" value="UniProtKB-KW"/>
</dbReference>
<dbReference type="GO" id="GO:0051287">
    <property type="term" value="F:NAD binding"/>
    <property type="evidence" value="ECO:0007669"/>
    <property type="project" value="InterPro"/>
</dbReference>
<dbReference type="GO" id="GO:0008948">
    <property type="term" value="F:oxaloacetate decarboxylase activity"/>
    <property type="evidence" value="ECO:0007669"/>
    <property type="project" value="UniProtKB-UniRule"/>
</dbReference>
<dbReference type="GO" id="GO:0006108">
    <property type="term" value="P:malate metabolic process"/>
    <property type="evidence" value="ECO:0007669"/>
    <property type="project" value="TreeGrafter"/>
</dbReference>
<dbReference type="CDD" id="cd05312">
    <property type="entry name" value="NAD_bind_1_malic_enz"/>
    <property type="match status" value="1"/>
</dbReference>
<dbReference type="FunFam" id="3.40.50.10380:FF:000001">
    <property type="entry name" value="NAD-dependent malic enzyme"/>
    <property type="match status" value="1"/>
</dbReference>
<dbReference type="FunFam" id="3.40.50.720:FF:000055">
    <property type="entry name" value="NAD-dependent malic enzyme"/>
    <property type="match status" value="1"/>
</dbReference>
<dbReference type="Gene3D" id="3.40.50.10380">
    <property type="entry name" value="Malic enzyme, N-terminal domain"/>
    <property type="match status" value="1"/>
</dbReference>
<dbReference type="Gene3D" id="3.40.50.720">
    <property type="entry name" value="NAD(P)-binding Rossmann-like Domain"/>
    <property type="match status" value="1"/>
</dbReference>
<dbReference type="HAMAP" id="MF_01619">
    <property type="entry name" value="NAD_malic_enz"/>
    <property type="match status" value="1"/>
</dbReference>
<dbReference type="InterPro" id="IPR046346">
    <property type="entry name" value="Aminoacid_DH-like_N_sf"/>
</dbReference>
<dbReference type="InterPro" id="IPR015884">
    <property type="entry name" value="Malic_enzyme_CS"/>
</dbReference>
<dbReference type="InterPro" id="IPR012301">
    <property type="entry name" value="Malic_N_dom"/>
</dbReference>
<dbReference type="InterPro" id="IPR037062">
    <property type="entry name" value="Malic_N_dom_sf"/>
</dbReference>
<dbReference type="InterPro" id="IPR012302">
    <property type="entry name" value="Malic_NAD-bd"/>
</dbReference>
<dbReference type="InterPro" id="IPR001891">
    <property type="entry name" value="Malic_OxRdtase"/>
</dbReference>
<dbReference type="InterPro" id="IPR036291">
    <property type="entry name" value="NAD(P)-bd_dom_sf"/>
</dbReference>
<dbReference type="InterPro" id="IPR023667">
    <property type="entry name" value="NAD_malic_enz_proteobac"/>
</dbReference>
<dbReference type="NCBIfam" id="NF010052">
    <property type="entry name" value="PRK13529.1"/>
    <property type="match status" value="1"/>
</dbReference>
<dbReference type="PANTHER" id="PTHR23406">
    <property type="entry name" value="MALIC ENZYME-RELATED"/>
    <property type="match status" value="1"/>
</dbReference>
<dbReference type="PANTHER" id="PTHR23406:SF34">
    <property type="entry name" value="NAD-DEPENDENT MALIC ENZYME, MITOCHONDRIAL"/>
    <property type="match status" value="1"/>
</dbReference>
<dbReference type="Pfam" id="PF00390">
    <property type="entry name" value="malic"/>
    <property type="match status" value="1"/>
</dbReference>
<dbReference type="Pfam" id="PF03949">
    <property type="entry name" value="Malic_M"/>
    <property type="match status" value="1"/>
</dbReference>
<dbReference type="PIRSF" id="PIRSF000106">
    <property type="entry name" value="ME"/>
    <property type="match status" value="1"/>
</dbReference>
<dbReference type="PRINTS" id="PR00072">
    <property type="entry name" value="MALOXRDTASE"/>
</dbReference>
<dbReference type="SMART" id="SM01274">
    <property type="entry name" value="malic"/>
    <property type="match status" value="1"/>
</dbReference>
<dbReference type="SMART" id="SM00919">
    <property type="entry name" value="Malic_M"/>
    <property type="match status" value="1"/>
</dbReference>
<dbReference type="SUPFAM" id="SSF53223">
    <property type="entry name" value="Aminoacid dehydrogenase-like, N-terminal domain"/>
    <property type="match status" value="1"/>
</dbReference>
<dbReference type="SUPFAM" id="SSF51735">
    <property type="entry name" value="NAD(P)-binding Rossmann-fold domains"/>
    <property type="match status" value="1"/>
</dbReference>
<dbReference type="PROSITE" id="PS00331">
    <property type="entry name" value="MALIC_ENZYMES"/>
    <property type="match status" value="1"/>
</dbReference>
<reference key="1">
    <citation type="journal article" date="2009" name="J. Bacteriol.">
        <title>Complete genome sequence and comparative genome analysis of enteropathogenic Escherichia coli O127:H6 strain E2348/69.</title>
        <authorList>
            <person name="Iguchi A."/>
            <person name="Thomson N.R."/>
            <person name="Ogura Y."/>
            <person name="Saunders D."/>
            <person name="Ooka T."/>
            <person name="Henderson I.R."/>
            <person name="Harris D."/>
            <person name="Asadulghani M."/>
            <person name="Kurokawa K."/>
            <person name="Dean P."/>
            <person name="Kenny B."/>
            <person name="Quail M.A."/>
            <person name="Thurston S."/>
            <person name="Dougan G."/>
            <person name="Hayashi T."/>
            <person name="Parkhill J."/>
            <person name="Frankel G."/>
        </authorList>
    </citation>
    <scope>NUCLEOTIDE SEQUENCE [LARGE SCALE GENOMIC DNA]</scope>
    <source>
        <strain>E2348/69 / EPEC</strain>
    </source>
</reference>
<protein>
    <recommendedName>
        <fullName evidence="1">NAD-dependent malic enzyme</fullName>
        <shortName evidence="1">NAD-ME</shortName>
        <ecNumber evidence="1">1.1.1.38</ecNumber>
    </recommendedName>
</protein>